<evidence type="ECO:0000256" key="1">
    <source>
        <dbReference type="SAM" id="MobiDB-lite"/>
    </source>
</evidence>
<evidence type="ECO:0000305" key="2"/>
<evidence type="ECO:0000312" key="3">
    <source>
        <dbReference type="HGNC" id="HGNC:54843"/>
    </source>
</evidence>
<comment type="similarity">
    <text evidence="2">Belongs to the FAM246 family.</text>
</comment>
<reference key="1">
    <citation type="journal article" date="1999" name="Nature">
        <title>The DNA sequence of human chromosome 22.</title>
        <authorList>
            <person name="Dunham I."/>
            <person name="Hunt A.R."/>
            <person name="Collins J.E."/>
            <person name="Bruskiewich R."/>
            <person name="Beare D.M."/>
            <person name="Clamp M."/>
            <person name="Smink L.J."/>
            <person name="Ainscough R."/>
            <person name="Almeida J.P."/>
            <person name="Babbage A.K."/>
            <person name="Bagguley C."/>
            <person name="Bailey J."/>
            <person name="Barlow K.F."/>
            <person name="Bates K.N."/>
            <person name="Beasley O.P."/>
            <person name="Bird C.P."/>
            <person name="Blakey S.E."/>
            <person name="Bridgeman A.M."/>
            <person name="Buck D."/>
            <person name="Burgess J."/>
            <person name="Burrill W.D."/>
            <person name="Burton J."/>
            <person name="Carder C."/>
            <person name="Carter N.P."/>
            <person name="Chen Y."/>
            <person name="Clark G."/>
            <person name="Clegg S.M."/>
            <person name="Cobley V.E."/>
            <person name="Cole C.G."/>
            <person name="Collier R.E."/>
            <person name="Connor R."/>
            <person name="Conroy D."/>
            <person name="Corby N.R."/>
            <person name="Coville G.J."/>
            <person name="Cox A.V."/>
            <person name="Davis J."/>
            <person name="Dawson E."/>
            <person name="Dhami P.D."/>
            <person name="Dockree C."/>
            <person name="Dodsworth S.J."/>
            <person name="Durbin R.M."/>
            <person name="Ellington A.G."/>
            <person name="Evans K.L."/>
            <person name="Fey J.M."/>
            <person name="Fleming K."/>
            <person name="French L."/>
            <person name="Garner A.A."/>
            <person name="Gilbert J.G.R."/>
            <person name="Goward M.E."/>
            <person name="Grafham D.V."/>
            <person name="Griffiths M.N.D."/>
            <person name="Hall C."/>
            <person name="Hall R.E."/>
            <person name="Hall-Tamlyn G."/>
            <person name="Heathcott R.W."/>
            <person name="Ho S."/>
            <person name="Holmes S."/>
            <person name="Hunt S.E."/>
            <person name="Jones M.C."/>
            <person name="Kershaw J."/>
            <person name="Kimberley A.M."/>
            <person name="King A."/>
            <person name="Laird G.K."/>
            <person name="Langford C.F."/>
            <person name="Leversha M.A."/>
            <person name="Lloyd C."/>
            <person name="Lloyd D.M."/>
            <person name="Martyn I.D."/>
            <person name="Mashreghi-Mohammadi M."/>
            <person name="Matthews L.H."/>
            <person name="Mccann O.T."/>
            <person name="Mcclay J."/>
            <person name="Mclaren S."/>
            <person name="McMurray A.A."/>
            <person name="Milne S.A."/>
            <person name="Mortimore B.J."/>
            <person name="Odell C.N."/>
            <person name="Pavitt R."/>
            <person name="Pearce A.V."/>
            <person name="Pearson D."/>
            <person name="Phillimore B.J.C.T."/>
            <person name="Phillips S.H."/>
            <person name="Plumb R.W."/>
            <person name="Ramsay H."/>
            <person name="Ramsey Y."/>
            <person name="Rogers L."/>
            <person name="Ross M.T."/>
            <person name="Scott C.E."/>
            <person name="Sehra H.K."/>
            <person name="Skuce C.D."/>
            <person name="Smalley S."/>
            <person name="Smith M.L."/>
            <person name="Soderlund C."/>
            <person name="Spragon L."/>
            <person name="Steward C.A."/>
            <person name="Sulston J.E."/>
            <person name="Swann R.M."/>
            <person name="Vaudin M."/>
            <person name="Wall M."/>
            <person name="Wallis J.M."/>
            <person name="Whiteley M.N."/>
            <person name="Willey D.L."/>
            <person name="Williams L."/>
            <person name="Williams S.A."/>
            <person name="Williamson H."/>
            <person name="Wilmer T.E."/>
            <person name="Wilming L."/>
            <person name="Wright C.L."/>
            <person name="Hubbard T."/>
            <person name="Bentley D.R."/>
            <person name="Beck S."/>
            <person name="Rogers J."/>
            <person name="Shimizu N."/>
            <person name="Minoshima S."/>
            <person name="Kawasaki K."/>
            <person name="Sasaki T."/>
            <person name="Asakawa S."/>
            <person name="Kudoh J."/>
            <person name="Shintani A."/>
            <person name="Shibuya K."/>
            <person name="Yoshizaki Y."/>
            <person name="Aoki N."/>
            <person name="Mitsuyama S."/>
            <person name="Roe B.A."/>
            <person name="Chen F."/>
            <person name="Chu L."/>
            <person name="Crabtree J."/>
            <person name="Deschamps S."/>
            <person name="Do A."/>
            <person name="Do T."/>
            <person name="Dorman A."/>
            <person name="Fang F."/>
            <person name="Fu Y."/>
            <person name="Hu P."/>
            <person name="Hua A."/>
            <person name="Kenton S."/>
            <person name="Lai H."/>
            <person name="Lao H.I."/>
            <person name="Lewis J."/>
            <person name="Lewis S."/>
            <person name="Lin S.-P."/>
            <person name="Loh P."/>
            <person name="Malaj E."/>
            <person name="Nguyen T."/>
            <person name="Pan H."/>
            <person name="Phan S."/>
            <person name="Qi S."/>
            <person name="Qian Y."/>
            <person name="Ray L."/>
            <person name="Ren Q."/>
            <person name="Shaull S."/>
            <person name="Sloan D."/>
            <person name="Song L."/>
            <person name="Wang Q."/>
            <person name="Wang Y."/>
            <person name="Wang Z."/>
            <person name="White J."/>
            <person name="Willingham D."/>
            <person name="Wu H."/>
            <person name="Yao Z."/>
            <person name="Zhan M."/>
            <person name="Zhang G."/>
            <person name="Chissoe S."/>
            <person name="Murray J."/>
            <person name="Miller N."/>
            <person name="Minx P."/>
            <person name="Fulton R."/>
            <person name="Johnson D."/>
            <person name="Bemis G."/>
            <person name="Bentley D."/>
            <person name="Bradshaw H."/>
            <person name="Bourne S."/>
            <person name="Cordes M."/>
            <person name="Du Z."/>
            <person name="Fulton L."/>
            <person name="Goela D."/>
            <person name="Graves T."/>
            <person name="Hawkins J."/>
            <person name="Hinds K."/>
            <person name="Kemp K."/>
            <person name="Latreille P."/>
            <person name="Layman D."/>
            <person name="Ozersky P."/>
            <person name="Rohlfing T."/>
            <person name="Scheet P."/>
            <person name="Walker C."/>
            <person name="Wamsley A."/>
            <person name="Wohldmann P."/>
            <person name="Pepin K."/>
            <person name="Nelson J."/>
            <person name="Korf I."/>
            <person name="Bedell J.A."/>
            <person name="Hillier L.W."/>
            <person name="Mardis E."/>
            <person name="Waterston R."/>
            <person name="Wilson R."/>
            <person name="Emanuel B.S."/>
            <person name="Shaikh T."/>
            <person name="Kurahashi H."/>
            <person name="Saitta S."/>
            <person name="Budarf M.L."/>
            <person name="McDermid H.E."/>
            <person name="Johnson A."/>
            <person name="Wong A.C.C."/>
            <person name="Morrow B.E."/>
            <person name="Edelmann L."/>
            <person name="Kim U.J."/>
            <person name="Shizuya H."/>
            <person name="Simon M.I."/>
            <person name="Dumanski J.P."/>
            <person name="Peyrard M."/>
            <person name="Kedra D."/>
            <person name="Seroussi E."/>
            <person name="Fransson I."/>
            <person name="Tapia I."/>
            <person name="Bruder C.E."/>
            <person name="O'Brien K.P."/>
            <person name="Wilkinson P."/>
            <person name="Bodenteich A."/>
            <person name="Hartman K."/>
            <person name="Hu X."/>
            <person name="Khan A.S."/>
            <person name="Lane L."/>
            <person name="Tilahun Y."/>
            <person name="Wright H."/>
        </authorList>
    </citation>
    <scope>NUCLEOTIDE SEQUENCE [LARGE SCALE GENOMIC DNA]</scope>
</reference>
<organism>
    <name type="scientific">Homo sapiens</name>
    <name type="common">Human</name>
    <dbReference type="NCBI Taxonomy" id="9606"/>
    <lineage>
        <taxon>Eukaryota</taxon>
        <taxon>Metazoa</taxon>
        <taxon>Chordata</taxon>
        <taxon>Craniata</taxon>
        <taxon>Vertebrata</taxon>
        <taxon>Euteleostomi</taxon>
        <taxon>Mammalia</taxon>
        <taxon>Eutheria</taxon>
        <taxon>Euarchontoglires</taxon>
        <taxon>Primates</taxon>
        <taxon>Haplorrhini</taxon>
        <taxon>Catarrhini</taxon>
        <taxon>Hominidae</taxon>
        <taxon>Homo</taxon>
    </lineage>
</organism>
<feature type="chain" id="PRO_0000450449" description="Protein FAM246B">
    <location>
        <begin position="1"/>
        <end position="232"/>
    </location>
</feature>
<feature type="region of interest" description="Disordered" evidence="1">
    <location>
        <begin position="19"/>
        <end position="47"/>
    </location>
</feature>
<feature type="region of interest" description="Disordered" evidence="1">
    <location>
        <begin position="80"/>
        <end position="101"/>
    </location>
</feature>
<feature type="region of interest" description="Disordered" evidence="1">
    <location>
        <begin position="151"/>
        <end position="179"/>
    </location>
</feature>
<feature type="region of interest" description="Disordered" evidence="1">
    <location>
        <begin position="191"/>
        <end position="232"/>
    </location>
</feature>
<feature type="compositionally biased region" description="Basic and acidic residues" evidence="1">
    <location>
        <begin position="19"/>
        <end position="31"/>
    </location>
</feature>
<feature type="compositionally biased region" description="Basic residues" evidence="1">
    <location>
        <begin position="211"/>
        <end position="220"/>
    </location>
</feature>
<sequence>MATPGRPWAQARSAYRASEVLRRVTGRRRDPGPQSNGPGREDARAPGRLARLLRQLRAEAASRSEVPRLLKLVERAGAGAAGAGERTGAHSRGSVCSVCGEPRGRATYPAGVLEVSERRLQEGLAAVREELGAEIEALRAELRAELDALRALLPPPPPSPPARREPRAVPRAAPRGPTLLRTLGTVSALVAASRPADDAPDGPAECGAHRAPARKNHKKMPVPPGAPQGGGD</sequence>
<protein>
    <recommendedName>
        <fullName evidence="2">Protein FAM246B</fullName>
    </recommendedName>
</protein>
<accession>A0A494C0N9</accession>
<proteinExistence type="inferred from homology"/>
<name>F246B_HUMAN</name>
<gene>
    <name evidence="3" type="primary">FAM246B</name>
</gene>
<dbReference type="EMBL" id="AC023490">
    <property type="status" value="NOT_ANNOTATED_CDS"/>
    <property type="molecule type" value="Genomic_DNA"/>
</dbReference>
<dbReference type="CCDS" id="CCDS93113.1"/>
<dbReference type="RefSeq" id="NP_001382955.1">
    <property type="nucleotide sequence ID" value="NM_001396026.1"/>
</dbReference>
<dbReference type="RefSeq" id="XP_047297071.1">
    <property type="nucleotide sequence ID" value="XM_047441115.1"/>
</dbReference>
<dbReference type="SMR" id="A0A494C0N9"/>
<dbReference type="GlyGen" id="A0A494C0N9">
    <property type="glycosylation" value="1 site"/>
</dbReference>
<dbReference type="MassIVE" id="A0A494C0N9"/>
<dbReference type="PeptideAtlas" id="A0A494C0N9"/>
<dbReference type="Ensembl" id="ENST00000652395.1">
    <property type="protein sequence ID" value="ENSP00000498626.1"/>
    <property type="gene ID" value="ENSG00000286175.1"/>
</dbReference>
<dbReference type="GeneID" id="117134597"/>
<dbReference type="MANE-Select" id="ENST00000652395.1">
    <property type="protein sequence ID" value="ENSP00000498626.1"/>
    <property type="RefSeq nucleotide sequence ID" value="NM_001396026.1"/>
    <property type="RefSeq protein sequence ID" value="NP_001382955.1"/>
</dbReference>
<dbReference type="AGR" id="HGNC:54843"/>
<dbReference type="GeneCards" id="FAM246B"/>
<dbReference type="HGNC" id="HGNC:54843">
    <property type="gene designation" value="FAM246B"/>
</dbReference>
<dbReference type="HPA" id="ENSG00000286175">
    <property type="expression patterns" value="Not detected"/>
</dbReference>
<dbReference type="neXtProt" id="NX_A0A494C0N9"/>
<dbReference type="VEuPathDB" id="HostDB:ENSG00000286175"/>
<dbReference type="GeneTree" id="ENSGT01120000272536"/>
<dbReference type="InParanoid" id="A0A494C0N9"/>
<dbReference type="PRO" id="PR:A0A494C0N9"/>
<dbReference type="Proteomes" id="UP000005640">
    <property type="component" value="Chromosome 22"/>
</dbReference>
<dbReference type="Bgee" id="ENSG00000286175">
    <property type="expression patterns" value="Expressed in frontal cortex and 10 other cell types or tissues"/>
</dbReference>
<keyword id="KW-1185">Reference proteome</keyword>